<reference key="1">
    <citation type="journal article" date="2002" name="Proc. Natl. Acad. Sci. U.S.A.">
        <title>Genome sequence of a serotype M3 strain of group A Streptococcus: phage-encoded toxins, the high-virulence phenotype, and clone emergence.</title>
        <authorList>
            <person name="Beres S.B."/>
            <person name="Sylva G.L."/>
            <person name="Barbian K.D."/>
            <person name="Lei B."/>
            <person name="Hoff J.S."/>
            <person name="Mammarella N.D."/>
            <person name="Liu M.-Y."/>
            <person name="Smoot J.C."/>
            <person name="Porcella S.F."/>
            <person name="Parkins L.D."/>
            <person name="Campbell D.S."/>
            <person name="Smith T.M."/>
            <person name="McCormick J.K."/>
            <person name="Leung D.Y.M."/>
            <person name="Schlievert P.M."/>
            <person name="Musser J.M."/>
        </authorList>
    </citation>
    <scope>NUCLEOTIDE SEQUENCE [LARGE SCALE GENOMIC DNA]</scope>
    <source>
        <strain>ATCC BAA-595 / MGAS315</strain>
    </source>
</reference>
<keyword id="KW-0963">Cytoplasm</keyword>
<keyword id="KW-0369">Histidine metabolism</keyword>
<keyword id="KW-0456">Lyase</keyword>
<evidence type="ECO:0000255" key="1">
    <source>
        <dbReference type="HAMAP-Rule" id="MF_00229"/>
    </source>
</evidence>
<comment type="catalytic activity">
    <reaction evidence="1">
        <text>L-histidine = trans-urocanate + NH4(+)</text>
        <dbReference type="Rhea" id="RHEA:21232"/>
        <dbReference type="ChEBI" id="CHEBI:17771"/>
        <dbReference type="ChEBI" id="CHEBI:28938"/>
        <dbReference type="ChEBI" id="CHEBI:57595"/>
        <dbReference type="EC" id="4.3.1.3"/>
    </reaction>
</comment>
<comment type="pathway">
    <text evidence="1">Amino-acid degradation; L-histidine degradation into L-glutamate; N-formimidoyl-L-glutamate from L-histidine: step 1/3.</text>
</comment>
<comment type="subcellular location">
    <subcellularLocation>
        <location evidence="1">Cytoplasm</location>
    </subcellularLocation>
</comment>
<comment type="PTM">
    <text evidence="1">Contains an active site 4-methylidene-imidazol-5-one (MIO), which is formed autocatalytically by cyclization and dehydration of residues Ala-Ser-Gly.</text>
</comment>
<comment type="similarity">
    <text evidence="1">Belongs to the PAL/histidase family.</text>
</comment>
<organism>
    <name type="scientific">Streptococcus pyogenes serotype M3 (strain ATCC BAA-595 / MGAS315)</name>
    <dbReference type="NCBI Taxonomy" id="198466"/>
    <lineage>
        <taxon>Bacteria</taxon>
        <taxon>Bacillati</taxon>
        <taxon>Bacillota</taxon>
        <taxon>Bacilli</taxon>
        <taxon>Lactobacillales</taxon>
        <taxon>Streptococcaceae</taxon>
        <taxon>Streptococcus</taxon>
    </lineage>
</organism>
<gene>
    <name evidence="1" type="primary">hutH</name>
    <name type="ordered locus">SpyM3_1779</name>
</gene>
<protein>
    <recommendedName>
        <fullName evidence="1">Histidine ammonia-lyase</fullName>
        <shortName evidence="1">Histidase</shortName>
        <ecNumber evidence="1">4.3.1.3</ecNumber>
    </recommendedName>
</protein>
<feature type="chain" id="PRO_0000161040" description="Histidine ammonia-lyase">
    <location>
        <begin position="1"/>
        <end position="513"/>
    </location>
</feature>
<feature type="modified residue" description="2,3-didehydroalanine (Ser)" evidence="1">
    <location>
        <position position="145"/>
    </location>
</feature>
<feature type="cross-link" description="5-imidazolinone (Ala-Gly)" evidence="1">
    <location>
        <begin position="144"/>
        <end position="146"/>
    </location>
</feature>
<sequence>MTRVINLDGESLTIEDVIAIARQGVACRIDDSAIEAVNASRKIVDDIVSEKRVVYGVTTGFGSLCNVSISPEDTVQLQENLIRTHASGFGDPLPEDAVRAIMLIRINSLVKGYSGIRLSTIEKLLELLNKGVHPYIPEKGSLGASGDLAPLAHMVLPMLGLGKAYYKGELLSGQEALDKAGIDKISLAAKEGLALINGTTVLTAIGALATYDAIQLLKLSDLAGALSLEVHNGITSPFEENLHTIRPQSGQLATARNIRNLHEGSQNTTVATQSRVQDPYTLRCIPQIHGASKDSIAYVKSKVDIEINSVTDNPIICKDGHVISGGNFHGEPMAQPFDFLGIAISEIGNVSERRVERLVNSQLSKLPSFLVKYPGLNSGFMITQYACASLASENKVLAHPASVDSIPSCENQEDFVSMGTTAARKAFEILKNSHRIVATEIMAACQALDLKSENHELGKGTKVAYDLFRKEVNFIEHDKHIEIYDELNKASTVIEDPSFLEAVEQAVELSIQF</sequence>
<proteinExistence type="inferred from homology"/>
<name>HUTH_STRP3</name>
<dbReference type="EC" id="4.3.1.3" evidence="1"/>
<dbReference type="EMBL" id="AE014074">
    <property type="protein sequence ID" value="AAM80386.1"/>
    <property type="molecule type" value="Genomic_DNA"/>
</dbReference>
<dbReference type="RefSeq" id="WP_011055077.1">
    <property type="nucleotide sequence ID" value="NC_004070.1"/>
</dbReference>
<dbReference type="SMR" id="P0DB74"/>
<dbReference type="KEGG" id="spg:SpyM3_1779"/>
<dbReference type="HOGENOM" id="CLU_014801_4_0_9"/>
<dbReference type="UniPathway" id="UPA00379">
    <property type="reaction ID" value="UER00549"/>
</dbReference>
<dbReference type="Proteomes" id="UP000000564">
    <property type="component" value="Chromosome"/>
</dbReference>
<dbReference type="GO" id="GO:0005737">
    <property type="term" value="C:cytoplasm"/>
    <property type="evidence" value="ECO:0007669"/>
    <property type="project" value="UniProtKB-SubCell"/>
</dbReference>
<dbReference type="GO" id="GO:0004397">
    <property type="term" value="F:histidine ammonia-lyase activity"/>
    <property type="evidence" value="ECO:0007669"/>
    <property type="project" value="UniProtKB-UniRule"/>
</dbReference>
<dbReference type="GO" id="GO:0019556">
    <property type="term" value="P:L-histidine catabolic process to glutamate and formamide"/>
    <property type="evidence" value="ECO:0007669"/>
    <property type="project" value="UniProtKB-UniPathway"/>
</dbReference>
<dbReference type="GO" id="GO:0019557">
    <property type="term" value="P:L-histidine catabolic process to glutamate and formate"/>
    <property type="evidence" value="ECO:0007669"/>
    <property type="project" value="UniProtKB-UniPathway"/>
</dbReference>
<dbReference type="CDD" id="cd00332">
    <property type="entry name" value="PAL-HAL"/>
    <property type="match status" value="1"/>
</dbReference>
<dbReference type="FunFam" id="1.10.275.10:FF:000005">
    <property type="entry name" value="Histidine ammonia-lyase"/>
    <property type="match status" value="1"/>
</dbReference>
<dbReference type="FunFam" id="1.20.200.10:FF:000003">
    <property type="entry name" value="Histidine ammonia-lyase"/>
    <property type="match status" value="1"/>
</dbReference>
<dbReference type="Gene3D" id="1.20.200.10">
    <property type="entry name" value="Fumarase/aspartase (Central domain)"/>
    <property type="match status" value="1"/>
</dbReference>
<dbReference type="Gene3D" id="1.10.275.10">
    <property type="entry name" value="Fumarase/aspartase (N-terminal domain)"/>
    <property type="match status" value="1"/>
</dbReference>
<dbReference type="HAMAP" id="MF_00229">
    <property type="entry name" value="His_ammonia_lyase"/>
    <property type="match status" value="1"/>
</dbReference>
<dbReference type="InterPro" id="IPR001106">
    <property type="entry name" value="Aromatic_Lyase"/>
</dbReference>
<dbReference type="InterPro" id="IPR024083">
    <property type="entry name" value="Fumarase/histidase_N"/>
</dbReference>
<dbReference type="InterPro" id="IPR005921">
    <property type="entry name" value="HutH"/>
</dbReference>
<dbReference type="InterPro" id="IPR008948">
    <property type="entry name" value="L-Aspartase-like"/>
</dbReference>
<dbReference type="InterPro" id="IPR022313">
    <property type="entry name" value="Phe/His_NH3-lyase_AS"/>
</dbReference>
<dbReference type="NCBIfam" id="TIGR01225">
    <property type="entry name" value="hutH"/>
    <property type="match status" value="1"/>
</dbReference>
<dbReference type="NCBIfam" id="NF006871">
    <property type="entry name" value="PRK09367.1"/>
    <property type="match status" value="1"/>
</dbReference>
<dbReference type="PANTHER" id="PTHR10362">
    <property type="entry name" value="HISTIDINE AMMONIA-LYASE"/>
    <property type="match status" value="1"/>
</dbReference>
<dbReference type="Pfam" id="PF00221">
    <property type="entry name" value="Lyase_aromatic"/>
    <property type="match status" value="1"/>
</dbReference>
<dbReference type="SUPFAM" id="SSF48557">
    <property type="entry name" value="L-aspartase-like"/>
    <property type="match status" value="1"/>
</dbReference>
<dbReference type="PROSITE" id="PS00488">
    <property type="entry name" value="PAL_HISTIDASE"/>
    <property type="match status" value="1"/>
</dbReference>
<accession>P0DB74</accession>
<accession>Q8K5L5</accession>